<reference key="1">
    <citation type="submission" date="2007-05" db="EMBL/GenBank/DDBJ databases">
        <title>Complete sequence of chromosome of Psychrobacter sp. PRwf-1.</title>
        <authorList>
            <consortium name="US DOE Joint Genome Institute"/>
            <person name="Copeland A."/>
            <person name="Lucas S."/>
            <person name="Lapidus A."/>
            <person name="Barry K."/>
            <person name="Detter J.C."/>
            <person name="Glavina del Rio T."/>
            <person name="Hammon N."/>
            <person name="Israni S."/>
            <person name="Dalin E."/>
            <person name="Tice H."/>
            <person name="Pitluck S."/>
            <person name="Chain P."/>
            <person name="Malfatti S."/>
            <person name="Shin M."/>
            <person name="Vergez L."/>
            <person name="Schmutz J."/>
            <person name="Larimer F."/>
            <person name="Land M."/>
            <person name="Hauser L."/>
            <person name="Kyrpides N."/>
            <person name="Kim E."/>
            <person name="Tiedje J."/>
            <person name="Richardson P."/>
        </authorList>
    </citation>
    <scope>NUCLEOTIDE SEQUENCE [LARGE SCALE GENOMIC DNA]</scope>
    <source>
        <strain>PRwf-1</strain>
    </source>
</reference>
<dbReference type="EMBL" id="CP000713">
    <property type="protein sequence ID" value="ABQ94661.1"/>
    <property type="molecule type" value="Genomic_DNA"/>
</dbReference>
<dbReference type="SMR" id="A5WG70"/>
<dbReference type="STRING" id="349106.PsycPRwf_1721"/>
<dbReference type="KEGG" id="prw:PsycPRwf_1721"/>
<dbReference type="eggNOG" id="COG3100">
    <property type="taxonomic scope" value="Bacteria"/>
</dbReference>
<dbReference type="HOGENOM" id="CLU_155118_0_1_6"/>
<dbReference type="Gene3D" id="3.10.510.20">
    <property type="entry name" value="YcgL domain"/>
    <property type="match status" value="1"/>
</dbReference>
<dbReference type="HAMAP" id="MF_01866">
    <property type="entry name" value="UPF0745"/>
    <property type="match status" value="1"/>
</dbReference>
<dbReference type="InterPro" id="IPR038068">
    <property type="entry name" value="YcgL-like_sf"/>
</dbReference>
<dbReference type="InterPro" id="IPR027354">
    <property type="entry name" value="YcgL_dom"/>
</dbReference>
<dbReference type="PANTHER" id="PTHR38109">
    <property type="entry name" value="PROTEIN YCGL"/>
    <property type="match status" value="1"/>
</dbReference>
<dbReference type="PANTHER" id="PTHR38109:SF1">
    <property type="entry name" value="PROTEIN YCGL"/>
    <property type="match status" value="1"/>
</dbReference>
<dbReference type="Pfam" id="PF05166">
    <property type="entry name" value="YcgL"/>
    <property type="match status" value="1"/>
</dbReference>
<dbReference type="SUPFAM" id="SSF160191">
    <property type="entry name" value="YcgL-like"/>
    <property type="match status" value="1"/>
</dbReference>
<dbReference type="PROSITE" id="PS51648">
    <property type="entry name" value="YCGL"/>
    <property type="match status" value="1"/>
</dbReference>
<protein>
    <recommendedName>
        <fullName evidence="1">YcgL domain-containing protein PsycPRwf_1721</fullName>
    </recommendedName>
</protein>
<feature type="chain" id="PRO_0000375345" description="YcgL domain-containing protein PsycPRwf_1721">
    <location>
        <begin position="1"/>
        <end position="106"/>
    </location>
</feature>
<feature type="domain" description="YcgL" evidence="1">
    <location>
        <begin position="1"/>
        <end position="94"/>
    </location>
</feature>
<organism>
    <name type="scientific">Psychrobacter sp. (strain PRwf-1)</name>
    <dbReference type="NCBI Taxonomy" id="349106"/>
    <lineage>
        <taxon>Bacteria</taxon>
        <taxon>Pseudomonadati</taxon>
        <taxon>Pseudomonadota</taxon>
        <taxon>Gammaproteobacteria</taxon>
        <taxon>Moraxellales</taxon>
        <taxon>Moraxellaceae</taxon>
        <taxon>Psychrobacter</taxon>
    </lineage>
</organism>
<evidence type="ECO:0000255" key="1">
    <source>
        <dbReference type="HAMAP-Rule" id="MF_01866"/>
    </source>
</evidence>
<proteinExistence type="inferred from homology"/>
<name>Y1721_PSYWF</name>
<gene>
    <name type="ordered locus">PsycPRwf_1721</name>
</gene>
<sequence length="106" mass="12433">MHCDIYKFPKRSEMYVYIARPDYPNDTDEIKDWLGVLPKDLRQSLGEPKFLMHLDLAETKKLARVNKDDVIEKLQSQGYFVQTPPSDVLLAQAQARMKEGQDKRYD</sequence>
<accession>A5WG70</accession>